<comment type="function">
    <text evidence="1">Involved in the biosynthesis of isoprenoids. Catalyzes the 1,3-allylic rearrangement of the homoallylic substrate isopentenyl (IPP) to its allylic isomer, dimethylallyl diphosphate (DMAPP).</text>
</comment>
<comment type="catalytic activity">
    <reaction evidence="1">
        <text>isopentenyl diphosphate = dimethylallyl diphosphate</text>
        <dbReference type="Rhea" id="RHEA:23284"/>
        <dbReference type="ChEBI" id="CHEBI:57623"/>
        <dbReference type="ChEBI" id="CHEBI:128769"/>
        <dbReference type="EC" id="5.3.3.2"/>
    </reaction>
</comment>
<comment type="cofactor">
    <cofactor evidence="1">
        <name>FMN</name>
        <dbReference type="ChEBI" id="CHEBI:58210"/>
    </cofactor>
</comment>
<comment type="cofactor">
    <cofactor evidence="1">
        <name>NADPH</name>
        <dbReference type="ChEBI" id="CHEBI:57783"/>
    </cofactor>
</comment>
<comment type="cofactor">
    <cofactor evidence="1">
        <name>Mg(2+)</name>
        <dbReference type="ChEBI" id="CHEBI:18420"/>
    </cofactor>
</comment>
<comment type="subunit">
    <text evidence="1">Homooctamer. Dimer of tetramers.</text>
</comment>
<comment type="subcellular location">
    <subcellularLocation>
        <location evidence="1">Cytoplasm</location>
    </subcellularLocation>
</comment>
<comment type="similarity">
    <text evidence="1">Belongs to the IPP isomerase type 2 family.</text>
</comment>
<proteinExistence type="inferred from homology"/>
<organism>
    <name type="scientific">Streptococcus pyogenes serotype M3 (strain ATCC BAA-595 / MGAS315)</name>
    <dbReference type="NCBI Taxonomy" id="198466"/>
    <lineage>
        <taxon>Bacteria</taxon>
        <taxon>Bacillati</taxon>
        <taxon>Bacillota</taxon>
        <taxon>Bacilli</taxon>
        <taxon>Lactobacillales</taxon>
        <taxon>Streptococcaceae</taxon>
        <taxon>Streptococcus</taxon>
    </lineage>
</organism>
<gene>
    <name evidence="1" type="primary">fni</name>
    <name type="ordered locus">SpyM3_0598</name>
</gene>
<reference key="1">
    <citation type="journal article" date="2002" name="Proc. Natl. Acad. Sci. U.S.A.">
        <title>Genome sequence of a serotype M3 strain of group A Streptococcus: phage-encoded toxins, the high-virulence phenotype, and clone emergence.</title>
        <authorList>
            <person name="Beres S.B."/>
            <person name="Sylva G.L."/>
            <person name="Barbian K.D."/>
            <person name="Lei B."/>
            <person name="Hoff J.S."/>
            <person name="Mammarella N.D."/>
            <person name="Liu M.-Y."/>
            <person name="Smoot J.C."/>
            <person name="Porcella S.F."/>
            <person name="Parkins L.D."/>
            <person name="Campbell D.S."/>
            <person name="Smith T.M."/>
            <person name="McCormick J.K."/>
            <person name="Leung D.Y.M."/>
            <person name="Schlievert P.M."/>
            <person name="Musser J.M."/>
        </authorList>
    </citation>
    <scope>NUCLEOTIDE SEQUENCE [LARGE SCALE GENOMIC DNA]</scope>
    <source>
        <strain>ATCC BAA-595 / MGAS315</strain>
    </source>
</reference>
<evidence type="ECO:0000255" key="1">
    <source>
        <dbReference type="HAMAP-Rule" id="MF_00354"/>
    </source>
</evidence>
<name>IDI2_STRP3</name>
<accession>P0DB80</accession>
<accession>P65104</accession>
<accession>Q9A095</accession>
<feature type="chain" id="PRO_0000134434" description="Isopentenyl-diphosphate delta-isomerase">
    <location>
        <begin position="1"/>
        <end position="329"/>
    </location>
</feature>
<feature type="binding site" evidence="1">
    <location>
        <begin position="4"/>
        <end position="5"/>
    </location>
    <ligand>
        <name>substrate</name>
    </ligand>
</feature>
<feature type="binding site" evidence="1">
    <location>
        <begin position="59"/>
        <end position="61"/>
    </location>
    <ligand>
        <name>FMN</name>
        <dbReference type="ChEBI" id="CHEBI:58210"/>
    </ligand>
</feature>
<feature type="binding site" evidence="1">
    <location>
        <position position="89"/>
    </location>
    <ligand>
        <name>FMN</name>
        <dbReference type="ChEBI" id="CHEBI:58210"/>
    </ligand>
</feature>
<feature type="binding site" evidence="1">
    <location>
        <position position="116"/>
    </location>
    <ligand>
        <name>FMN</name>
        <dbReference type="ChEBI" id="CHEBI:58210"/>
    </ligand>
</feature>
<feature type="binding site" evidence="1">
    <location>
        <position position="146"/>
    </location>
    <ligand>
        <name>substrate</name>
    </ligand>
</feature>
<feature type="binding site" evidence="1">
    <location>
        <position position="147"/>
    </location>
    <ligand>
        <name>Mg(2+)</name>
        <dbReference type="ChEBI" id="CHEBI:18420"/>
    </ligand>
</feature>
<feature type="binding site" evidence="1">
    <location>
        <position position="178"/>
    </location>
    <ligand>
        <name>FMN</name>
        <dbReference type="ChEBI" id="CHEBI:58210"/>
    </ligand>
</feature>
<feature type="binding site" evidence="1">
    <location>
        <position position="203"/>
    </location>
    <ligand>
        <name>FMN</name>
        <dbReference type="ChEBI" id="CHEBI:58210"/>
    </ligand>
</feature>
<feature type="binding site" evidence="1">
    <location>
        <position position="208"/>
    </location>
    <ligand>
        <name>FMN</name>
        <dbReference type="ChEBI" id="CHEBI:58210"/>
    </ligand>
</feature>
<feature type="binding site" evidence="1">
    <location>
        <begin position="252"/>
        <end position="254"/>
    </location>
    <ligand>
        <name>FMN</name>
        <dbReference type="ChEBI" id="CHEBI:58210"/>
    </ligand>
</feature>
<feature type="binding site" evidence="1">
    <location>
        <begin position="273"/>
        <end position="274"/>
    </location>
    <ligand>
        <name>FMN</name>
        <dbReference type="ChEBI" id="CHEBI:58210"/>
    </ligand>
</feature>
<keyword id="KW-0963">Cytoplasm</keyword>
<keyword id="KW-0285">Flavoprotein</keyword>
<keyword id="KW-0288">FMN</keyword>
<keyword id="KW-0413">Isomerase</keyword>
<keyword id="KW-0414">Isoprene biosynthesis</keyword>
<keyword id="KW-0460">Magnesium</keyword>
<keyword id="KW-0479">Metal-binding</keyword>
<keyword id="KW-0521">NADP</keyword>
<protein>
    <recommendedName>
        <fullName evidence="1">Isopentenyl-diphosphate delta-isomerase</fullName>
        <shortName evidence="1">IPP isomerase</shortName>
        <ecNumber evidence="1">5.3.3.2</ecNumber>
    </recommendedName>
    <alternativeName>
        <fullName evidence="1">Isopentenyl diphosphate:dimethylallyl diphosphate isomerase</fullName>
    </alternativeName>
    <alternativeName>
        <fullName evidence="1">Isopentenyl pyrophosphate isomerase</fullName>
    </alternativeName>
    <alternativeName>
        <fullName evidence="1">Type 2 isopentenyl diphosphate isomerase</fullName>
        <shortName evidence="1">IDI-2</shortName>
    </alternativeName>
</protein>
<sequence length="329" mass="36649">MTNRKDDHIKYALKYQSPYNAFDDIELIHHSLPSYDLSDIDLSTHFAGQDFDFPFYINAMTGGSQKGKAVNEKLAKVAAATGIVMVTGSYSAALKNPNDDSYRLHEVADNLKLATNIGLDKPVALGQQTVQEMQPLFLQVHVNVMQELLMPEGERVFHTWKKHLAEYASQIPVPVILKEVGFGMDVNSIKLAHDLGIQTFDISGRGGTSFAYIENQRGGDRSYLNDWGQTTVQCLLNAQGLMDQVEILASGGVRHPLDMIKCFVLGARAVGLSRTVLELVEKYPTERVIAIVNGWKEELKIIMCALDCKTIKELKGVDYLLYGRLQQVN</sequence>
<dbReference type="EC" id="5.3.3.2" evidence="1"/>
<dbReference type="EMBL" id="AE014074">
    <property type="protein sequence ID" value="AAM79205.1"/>
    <property type="molecule type" value="Genomic_DNA"/>
</dbReference>
<dbReference type="RefSeq" id="WP_010922169.1">
    <property type="nucleotide sequence ID" value="NC_004070.1"/>
</dbReference>
<dbReference type="SMR" id="P0DB80"/>
<dbReference type="GeneID" id="69901016"/>
<dbReference type="KEGG" id="spg:SpyM3_0598"/>
<dbReference type="HOGENOM" id="CLU_065515_0_0_9"/>
<dbReference type="Proteomes" id="UP000000564">
    <property type="component" value="Chromosome"/>
</dbReference>
<dbReference type="GO" id="GO:0005737">
    <property type="term" value="C:cytoplasm"/>
    <property type="evidence" value="ECO:0007669"/>
    <property type="project" value="UniProtKB-SubCell"/>
</dbReference>
<dbReference type="GO" id="GO:0010181">
    <property type="term" value="F:FMN binding"/>
    <property type="evidence" value="ECO:0007669"/>
    <property type="project" value="UniProtKB-UniRule"/>
</dbReference>
<dbReference type="GO" id="GO:0004452">
    <property type="term" value="F:isopentenyl-diphosphate delta-isomerase activity"/>
    <property type="evidence" value="ECO:0007669"/>
    <property type="project" value="UniProtKB-UniRule"/>
</dbReference>
<dbReference type="GO" id="GO:0000287">
    <property type="term" value="F:magnesium ion binding"/>
    <property type="evidence" value="ECO:0007669"/>
    <property type="project" value="UniProtKB-UniRule"/>
</dbReference>
<dbReference type="GO" id="GO:0070402">
    <property type="term" value="F:NADPH binding"/>
    <property type="evidence" value="ECO:0007669"/>
    <property type="project" value="UniProtKB-UniRule"/>
</dbReference>
<dbReference type="GO" id="GO:0016491">
    <property type="term" value="F:oxidoreductase activity"/>
    <property type="evidence" value="ECO:0007669"/>
    <property type="project" value="InterPro"/>
</dbReference>
<dbReference type="GO" id="GO:0008299">
    <property type="term" value="P:isoprenoid biosynthetic process"/>
    <property type="evidence" value="ECO:0007669"/>
    <property type="project" value="UniProtKB-UniRule"/>
</dbReference>
<dbReference type="CDD" id="cd02811">
    <property type="entry name" value="IDI-2_FMN"/>
    <property type="match status" value="1"/>
</dbReference>
<dbReference type="Gene3D" id="3.20.20.70">
    <property type="entry name" value="Aldolase class I"/>
    <property type="match status" value="1"/>
</dbReference>
<dbReference type="HAMAP" id="MF_00354">
    <property type="entry name" value="Idi_2"/>
    <property type="match status" value="1"/>
</dbReference>
<dbReference type="InterPro" id="IPR013785">
    <property type="entry name" value="Aldolase_TIM"/>
</dbReference>
<dbReference type="InterPro" id="IPR000262">
    <property type="entry name" value="FMN-dep_DH"/>
</dbReference>
<dbReference type="InterPro" id="IPR011179">
    <property type="entry name" value="IPdP_isomerase"/>
</dbReference>
<dbReference type="NCBIfam" id="TIGR02151">
    <property type="entry name" value="IPP_isom_2"/>
    <property type="match status" value="1"/>
</dbReference>
<dbReference type="PANTHER" id="PTHR43665">
    <property type="entry name" value="ISOPENTENYL-DIPHOSPHATE DELTA-ISOMERASE"/>
    <property type="match status" value="1"/>
</dbReference>
<dbReference type="PANTHER" id="PTHR43665:SF1">
    <property type="entry name" value="ISOPENTENYL-DIPHOSPHATE DELTA-ISOMERASE"/>
    <property type="match status" value="1"/>
</dbReference>
<dbReference type="Pfam" id="PF01070">
    <property type="entry name" value="FMN_dh"/>
    <property type="match status" value="2"/>
</dbReference>
<dbReference type="PIRSF" id="PIRSF003314">
    <property type="entry name" value="IPP_isomerase"/>
    <property type="match status" value="1"/>
</dbReference>
<dbReference type="SUPFAM" id="SSF51395">
    <property type="entry name" value="FMN-linked oxidoreductases"/>
    <property type="match status" value="1"/>
</dbReference>